<keyword id="KW-0067">ATP-binding</keyword>
<keyword id="KW-0131">Cell cycle</keyword>
<keyword id="KW-0132">Cell division</keyword>
<keyword id="KW-0963">Cytoplasm</keyword>
<keyword id="KW-0206">Cytoskeleton</keyword>
<keyword id="KW-0418">Kinase</keyword>
<keyword id="KW-0498">Mitosis</keyword>
<keyword id="KW-0547">Nucleotide-binding</keyword>
<keyword id="KW-1185">Reference proteome</keyword>
<keyword id="KW-0723">Serine/threonine-protein kinase</keyword>
<keyword id="KW-0808">Transferase</keyword>
<name>SID1_SCHPO</name>
<comment type="function">
    <text evidence="2 3">Has a role in the septation initiation network (SIN) required for cytokinesis.</text>
</comment>
<comment type="catalytic activity">
    <reaction>
        <text>L-seryl-[protein] + ATP = O-phospho-L-seryl-[protein] + ADP + H(+)</text>
        <dbReference type="Rhea" id="RHEA:17989"/>
        <dbReference type="Rhea" id="RHEA-COMP:9863"/>
        <dbReference type="Rhea" id="RHEA-COMP:11604"/>
        <dbReference type="ChEBI" id="CHEBI:15378"/>
        <dbReference type="ChEBI" id="CHEBI:29999"/>
        <dbReference type="ChEBI" id="CHEBI:30616"/>
        <dbReference type="ChEBI" id="CHEBI:83421"/>
        <dbReference type="ChEBI" id="CHEBI:456216"/>
        <dbReference type="EC" id="2.7.11.1"/>
    </reaction>
</comment>
<comment type="catalytic activity">
    <reaction>
        <text>L-threonyl-[protein] + ATP = O-phospho-L-threonyl-[protein] + ADP + H(+)</text>
        <dbReference type="Rhea" id="RHEA:46608"/>
        <dbReference type="Rhea" id="RHEA-COMP:11060"/>
        <dbReference type="Rhea" id="RHEA-COMP:11605"/>
        <dbReference type="ChEBI" id="CHEBI:15378"/>
        <dbReference type="ChEBI" id="CHEBI:30013"/>
        <dbReference type="ChEBI" id="CHEBI:30616"/>
        <dbReference type="ChEBI" id="CHEBI:61977"/>
        <dbReference type="ChEBI" id="CHEBI:456216"/>
        <dbReference type="EC" id="2.7.11.1"/>
    </reaction>
</comment>
<comment type="subunit">
    <text evidence="2 3">Interacts with cdc14.</text>
</comment>
<comment type="subcellular location">
    <subcellularLocation>
        <location evidence="2 3">Cytoplasm</location>
        <location evidence="2 3">Cytoskeleton</location>
        <location evidence="2 3">Microtubule organizing center</location>
        <location evidence="2 3">Spindle pole body</location>
    </subcellularLocation>
    <text>Localizes to the SPB prior to cytokinesis and leaves once septation is complete.</text>
</comment>
<comment type="similarity">
    <text evidence="4">Belongs to the protein kinase superfamily. STE Ser/Thr protein kinase family. STE20 subfamily.</text>
</comment>
<accession>O14305</accession>
<evidence type="ECO:0000255" key="1">
    <source>
        <dbReference type="PROSITE-ProRule" id="PRU00159"/>
    </source>
</evidence>
<evidence type="ECO:0000269" key="2">
    <source>
    </source>
</evidence>
<evidence type="ECO:0000269" key="3">
    <source>
    </source>
</evidence>
<evidence type="ECO:0000305" key="4"/>
<proteinExistence type="evidence at protein level"/>
<sequence>MYPLNANSYTLLRKLGSGSFGVVWKARENVSGDIIAIKQIDLETGIDDITDIEQEVFMLSNCNSSNVIQYYGCFVDGYTLWILMEHMDGGSVSGLLKMGRLNEQVISIILREVLYGLNYLHGQNKIHRDIKAANILLSSSTGNVKLADFGVAAQLSNAASRRHTFVGTPFWMAPEVIQQTSYGLAADIWSLGITAIEMANGIPPRATMHPMRVIFEIPQSEPPKLDDHFSPTFRDFVSCCLDLNPNMRWSAKELLQHPFIKSAGTVKDIIPLLVQKENKLFDDSDQSVLEETINNTLKPFEEPIAEGNADIEDWTFETVKKSDSTVLGNTSIPKNSIISSQNKEELPSSIKYLEKTIMSDQATPHPFSKSLSEKGSSYHKSLTSDFAMKHYIKSTIRSMLLNDKLSATQRSSLESFYTSFISLDKNLSSKFVNQITPDNRLHHKKQKRSPISQLLFSRWLEETEKRRSLNG</sequence>
<gene>
    <name type="primary">sid1</name>
    <name type="ORF">SPAC9G1.09</name>
</gene>
<organism>
    <name type="scientific">Schizosaccharomyces pombe (strain 972 / ATCC 24843)</name>
    <name type="common">Fission yeast</name>
    <dbReference type="NCBI Taxonomy" id="284812"/>
    <lineage>
        <taxon>Eukaryota</taxon>
        <taxon>Fungi</taxon>
        <taxon>Dikarya</taxon>
        <taxon>Ascomycota</taxon>
        <taxon>Taphrinomycotina</taxon>
        <taxon>Schizosaccharomycetes</taxon>
        <taxon>Schizosaccharomycetales</taxon>
        <taxon>Schizosaccharomycetaceae</taxon>
        <taxon>Schizosaccharomyces</taxon>
    </lineage>
</organism>
<protein>
    <recommendedName>
        <fullName>Serine/threonine-protein kinase sid1</fullName>
        <ecNumber>2.7.11.1</ecNumber>
    </recommendedName>
    <alternativeName>
        <fullName>STE20-like kinase sid1</fullName>
    </alternativeName>
</protein>
<reference key="1">
    <citation type="journal article" date="2001" name="J. Biol. Chem.">
        <title>Interaction between the noncatalytic region of Sid1p kinase and Cdc14p is required for full catalytic activity and localization of Sid1p.</title>
        <authorList>
            <person name="Guertin D.A."/>
            <person name="McCollum D."/>
        </authorList>
    </citation>
    <scope>NUCLEOTIDE SEQUENCE [GENOMIC DNA]</scope>
    <scope>FUNCTION</scope>
    <scope>INTERACTION WITH CDC14</scope>
    <scope>SUBCELLULAR LOCATION</scope>
</reference>
<reference key="2">
    <citation type="journal article" date="2002" name="Nature">
        <title>The genome sequence of Schizosaccharomyces pombe.</title>
        <authorList>
            <person name="Wood V."/>
            <person name="Gwilliam R."/>
            <person name="Rajandream M.A."/>
            <person name="Lyne M.H."/>
            <person name="Lyne R."/>
            <person name="Stewart A."/>
            <person name="Sgouros J.G."/>
            <person name="Peat N."/>
            <person name="Hayles J."/>
            <person name="Baker S.G."/>
            <person name="Basham D."/>
            <person name="Bowman S."/>
            <person name="Brooks K."/>
            <person name="Brown D."/>
            <person name="Brown S."/>
            <person name="Chillingworth T."/>
            <person name="Churcher C.M."/>
            <person name="Collins M."/>
            <person name="Connor R."/>
            <person name="Cronin A."/>
            <person name="Davis P."/>
            <person name="Feltwell T."/>
            <person name="Fraser A."/>
            <person name="Gentles S."/>
            <person name="Goble A."/>
            <person name="Hamlin N."/>
            <person name="Harris D.E."/>
            <person name="Hidalgo J."/>
            <person name="Hodgson G."/>
            <person name="Holroyd S."/>
            <person name="Hornsby T."/>
            <person name="Howarth S."/>
            <person name="Huckle E.J."/>
            <person name="Hunt S."/>
            <person name="Jagels K."/>
            <person name="James K.D."/>
            <person name="Jones L."/>
            <person name="Jones M."/>
            <person name="Leather S."/>
            <person name="McDonald S."/>
            <person name="McLean J."/>
            <person name="Mooney P."/>
            <person name="Moule S."/>
            <person name="Mungall K.L."/>
            <person name="Murphy L.D."/>
            <person name="Niblett D."/>
            <person name="Odell C."/>
            <person name="Oliver K."/>
            <person name="O'Neil S."/>
            <person name="Pearson D."/>
            <person name="Quail M.A."/>
            <person name="Rabbinowitsch E."/>
            <person name="Rutherford K.M."/>
            <person name="Rutter S."/>
            <person name="Saunders D."/>
            <person name="Seeger K."/>
            <person name="Sharp S."/>
            <person name="Skelton J."/>
            <person name="Simmonds M.N."/>
            <person name="Squares R."/>
            <person name="Squares S."/>
            <person name="Stevens K."/>
            <person name="Taylor K."/>
            <person name="Taylor R.G."/>
            <person name="Tivey A."/>
            <person name="Walsh S.V."/>
            <person name="Warren T."/>
            <person name="Whitehead S."/>
            <person name="Woodward J.R."/>
            <person name="Volckaert G."/>
            <person name="Aert R."/>
            <person name="Robben J."/>
            <person name="Grymonprez B."/>
            <person name="Weltjens I."/>
            <person name="Vanstreels E."/>
            <person name="Rieger M."/>
            <person name="Schaefer M."/>
            <person name="Mueller-Auer S."/>
            <person name="Gabel C."/>
            <person name="Fuchs M."/>
            <person name="Duesterhoeft A."/>
            <person name="Fritzc C."/>
            <person name="Holzer E."/>
            <person name="Moestl D."/>
            <person name="Hilbert H."/>
            <person name="Borzym K."/>
            <person name="Langer I."/>
            <person name="Beck A."/>
            <person name="Lehrach H."/>
            <person name="Reinhardt R."/>
            <person name="Pohl T.M."/>
            <person name="Eger P."/>
            <person name="Zimmermann W."/>
            <person name="Wedler H."/>
            <person name="Wambutt R."/>
            <person name="Purnelle B."/>
            <person name="Goffeau A."/>
            <person name="Cadieu E."/>
            <person name="Dreano S."/>
            <person name="Gloux S."/>
            <person name="Lelaure V."/>
            <person name="Mottier S."/>
            <person name="Galibert F."/>
            <person name="Aves S.J."/>
            <person name="Xiang Z."/>
            <person name="Hunt C."/>
            <person name="Moore K."/>
            <person name="Hurst S.M."/>
            <person name="Lucas M."/>
            <person name="Rochet M."/>
            <person name="Gaillardin C."/>
            <person name="Tallada V.A."/>
            <person name="Garzon A."/>
            <person name="Thode G."/>
            <person name="Daga R.R."/>
            <person name="Cruzado L."/>
            <person name="Jimenez J."/>
            <person name="Sanchez M."/>
            <person name="del Rey F."/>
            <person name="Benito J."/>
            <person name="Dominguez A."/>
            <person name="Revuelta J.L."/>
            <person name="Moreno S."/>
            <person name="Armstrong J."/>
            <person name="Forsburg S.L."/>
            <person name="Cerutti L."/>
            <person name="Lowe T."/>
            <person name="McCombie W.R."/>
            <person name="Paulsen I."/>
            <person name="Potashkin J."/>
            <person name="Shpakovski G.V."/>
            <person name="Ussery D."/>
            <person name="Barrell B.G."/>
            <person name="Nurse P."/>
        </authorList>
    </citation>
    <scope>NUCLEOTIDE SEQUENCE [LARGE SCALE GENOMIC DNA]</scope>
    <source>
        <strain>972 / ATCC 24843</strain>
    </source>
</reference>
<reference key="3">
    <citation type="journal article" date="2000" name="EMBO J.">
        <title>The role of the sid1p kinase and cdc14p in regulating the onset of cytokinesis in fission yeast.</title>
        <authorList>
            <person name="Guertin D.A."/>
            <person name="Chang L."/>
            <person name="Irshad F."/>
            <person name="Gould K.L."/>
            <person name="McCollum D."/>
        </authorList>
    </citation>
    <scope>FUNCTION</scope>
    <scope>INTERACTION WITH CDC14</scope>
    <scope>SUBCELLULAR LOCATION</scope>
</reference>
<dbReference type="EC" id="2.7.11.1"/>
<dbReference type="EMBL" id="CU329670">
    <property type="protein sequence ID" value="CAB11493.1"/>
    <property type="molecule type" value="Genomic_DNA"/>
</dbReference>
<dbReference type="PIR" id="T39232">
    <property type="entry name" value="T39232"/>
</dbReference>
<dbReference type="RefSeq" id="NP_593564.1">
    <property type="nucleotide sequence ID" value="NM_001018997.2"/>
</dbReference>
<dbReference type="SMR" id="O14305"/>
<dbReference type="BioGRID" id="279196">
    <property type="interactions" value="17"/>
</dbReference>
<dbReference type="FunCoup" id="O14305">
    <property type="interactions" value="598"/>
</dbReference>
<dbReference type="STRING" id="284812.O14305"/>
<dbReference type="iPTMnet" id="O14305"/>
<dbReference type="PaxDb" id="4896-SPAC9G1.09.1"/>
<dbReference type="EnsemblFungi" id="SPAC9G1.09.1">
    <property type="protein sequence ID" value="SPAC9G1.09.1:pep"/>
    <property type="gene ID" value="SPAC9G1.09"/>
</dbReference>
<dbReference type="GeneID" id="2542746"/>
<dbReference type="KEGG" id="spo:2542746"/>
<dbReference type="PomBase" id="SPAC9G1.09">
    <property type="gene designation" value="sid1"/>
</dbReference>
<dbReference type="VEuPathDB" id="FungiDB:SPAC9G1.09"/>
<dbReference type="eggNOG" id="KOG0201">
    <property type="taxonomic scope" value="Eukaryota"/>
</dbReference>
<dbReference type="HOGENOM" id="CLU_000288_63_23_1"/>
<dbReference type="InParanoid" id="O14305"/>
<dbReference type="OMA" id="LWILMEH"/>
<dbReference type="PhylomeDB" id="O14305"/>
<dbReference type="CD-CODE" id="576F0A76">
    <property type="entry name" value="Centrosome"/>
</dbReference>
<dbReference type="PRO" id="PR:O14305"/>
<dbReference type="Proteomes" id="UP000002485">
    <property type="component" value="Chromosome I"/>
</dbReference>
<dbReference type="GO" id="GO:0005737">
    <property type="term" value="C:cytoplasm"/>
    <property type="evidence" value="ECO:0000318"/>
    <property type="project" value="GO_Central"/>
</dbReference>
<dbReference type="GO" id="GO:0005829">
    <property type="term" value="C:cytosol"/>
    <property type="evidence" value="ECO:0007005"/>
    <property type="project" value="PomBase"/>
</dbReference>
<dbReference type="GO" id="GO:0044732">
    <property type="term" value="C:mitotic spindle pole body"/>
    <property type="evidence" value="ECO:0007005"/>
    <property type="project" value="PomBase"/>
</dbReference>
<dbReference type="GO" id="GO:0071958">
    <property type="term" value="C:new mitotic spindle pole body"/>
    <property type="evidence" value="ECO:0000314"/>
    <property type="project" value="PomBase"/>
</dbReference>
<dbReference type="GO" id="GO:0005634">
    <property type="term" value="C:nucleus"/>
    <property type="evidence" value="ECO:0007005"/>
    <property type="project" value="PomBase"/>
</dbReference>
<dbReference type="GO" id="GO:0005524">
    <property type="term" value="F:ATP binding"/>
    <property type="evidence" value="ECO:0007669"/>
    <property type="project" value="UniProtKB-KW"/>
</dbReference>
<dbReference type="GO" id="GO:0106310">
    <property type="term" value="F:protein serine kinase activity"/>
    <property type="evidence" value="ECO:0007669"/>
    <property type="project" value="RHEA"/>
</dbReference>
<dbReference type="GO" id="GO:0004674">
    <property type="term" value="F:protein serine/threonine kinase activity"/>
    <property type="evidence" value="ECO:0000314"/>
    <property type="project" value="PomBase"/>
</dbReference>
<dbReference type="GO" id="GO:0051301">
    <property type="term" value="P:cell division"/>
    <property type="evidence" value="ECO:0007669"/>
    <property type="project" value="UniProtKB-KW"/>
</dbReference>
<dbReference type="GO" id="GO:0035556">
    <property type="term" value="P:intracellular signal transduction"/>
    <property type="evidence" value="ECO:0000318"/>
    <property type="project" value="GO_Central"/>
</dbReference>
<dbReference type="GO" id="GO:1902412">
    <property type="term" value="P:regulation of mitotic cytokinesis"/>
    <property type="evidence" value="ECO:0000315"/>
    <property type="project" value="PomBase"/>
</dbReference>
<dbReference type="GO" id="GO:0031028">
    <property type="term" value="P:septation initiation signaling"/>
    <property type="evidence" value="ECO:0000315"/>
    <property type="project" value="PomBase"/>
</dbReference>
<dbReference type="CDD" id="cd06609">
    <property type="entry name" value="STKc_MST3_like"/>
    <property type="match status" value="1"/>
</dbReference>
<dbReference type="FunFam" id="1.10.510.10:FF:000837">
    <property type="entry name" value="STE family protein kinase"/>
    <property type="match status" value="1"/>
</dbReference>
<dbReference type="Gene3D" id="1.10.510.10">
    <property type="entry name" value="Transferase(Phosphotransferase) domain 1"/>
    <property type="match status" value="1"/>
</dbReference>
<dbReference type="InterPro" id="IPR011009">
    <property type="entry name" value="Kinase-like_dom_sf"/>
</dbReference>
<dbReference type="InterPro" id="IPR000719">
    <property type="entry name" value="Prot_kinase_dom"/>
</dbReference>
<dbReference type="InterPro" id="IPR017441">
    <property type="entry name" value="Protein_kinase_ATP_BS"/>
</dbReference>
<dbReference type="InterPro" id="IPR050629">
    <property type="entry name" value="STE20/SPS1-PAK"/>
</dbReference>
<dbReference type="PANTHER" id="PTHR48012:SF27">
    <property type="entry name" value="SERINE_THREONINE-PROTEIN KINASE SID1"/>
    <property type="match status" value="1"/>
</dbReference>
<dbReference type="PANTHER" id="PTHR48012">
    <property type="entry name" value="STERILE20-LIKE KINASE, ISOFORM B-RELATED"/>
    <property type="match status" value="1"/>
</dbReference>
<dbReference type="Pfam" id="PF00069">
    <property type="entry name" value="Pkinase"/>
    <property type="match status" value="1"/>
</dbReference>
<dbReference type="SMART" id="SM00220">
    <property type="entry name" value="S_TKc"/>
    <property type="match status" value="1"/>
</dbReference>
<dbReference type="SUPFAM" id="SSF56112">
    <property type="entry name" value="Protein kinase-like (PK-like)"/>
    <property type="match status" value="1"/>
</dbReference>
<dbReference type="PROSITE" id="PS00107">
    <property type="entry name" value="PROTEIN_KINASE_ATP"/>
    <property type="match status" value="1"/>
</dbReference>
<dbReference type="PROSITE" id="PS50011">
    <property type="entry name" value="PROTEIN_KINASE_DOM"/>
    <property type="match status" value="1"/>
</dbReference>
<feature type="chain" id="PRO_0000086653" description="Serine/threonine-protein kinase sid1">
    <location>
        <begin position="1"/>
        <end position="471"/>
    </location>
</feature>
<feature type="domain" description="Protein kinase" evidence="1">
    <location>
        <begin position="9"/>
        <end position="260"/>
    </location>
</feature>
<feature type="active site" description="Proton acceptor" evidence="1">
    <location>
        <position position="129"/>
    </location>
</feature>
<feature type="binding site" evidence="1">
    <location>
        <begin position="15"/>
        <end position="23"/>
    </location>
    <ligand>
        <name>ATP</name>
        <dbReference type="ChEBI" id="CHEBI:30616"/>
    </ligand>
</feature>
<feature type="binding site" evidence="1">
    <location>
        <position position="38"/>
    </location>
    <ligand>
        <name>ATP</name>
        <dbReference type="ChEBI" id="CHEBI:30616"/>
    </ligand>
</feature>